<gene>
    <name evidence="1" type="primary">panD</name>
    <name type="ordered locus">NMC1216</name>
</gene>
<name>PAND_NEIMF</name>
<keyword id="KW-0068">Autocatalytic cleavage</keyword>
<keyword id="KW-0963">Cytoplasm</keyword>
<keyword id="KW-0210">Decarboxylase</keyword>
<keyword id="KW-0456">Lyase</keyword>
<keyword id="KW-0566">Pantothenate biosynthesis</keyword>
<keyword id="KW-0670">Pyruvate</keyword>
<keyword id="KW-0704">Schiff base</keyword>
<keyword id="KW-0865">Zymogen</keyword>
<evidence type="ECO:0000255" key="1">
    <source>
        <dbReference type="HAMAP-Rule" id="MF_00446"/>
    </source>
</evidence>
<proteinExistence type="inferred from homology"/>
<reference key="1">
    <citation type="journal article" date="2007" name="PLoS Genet.">
        <title>Meningococcal genetic variation mechanisms viewed through comparative analysis of serogroup C strain FAM18.</title>
        <authorList>
            <person name="Bentley S.D."/>
            <person name="Vernikos G.S."/>
            <person name="Snyder L.A.S."/>
            <person name="Churcher C."/>
            <person name="Arrowsmith C."/>
            <person name="Chillingworth T."/>
            <person name="Cronin A."/>
            <person name="Davis P.H."/>
            <person name="Holroyd N.E."/>
            <person name="Jagels K."/>
            <person name="Maddison M."/>
            <person name="Moule S."/>
            <person name="Rabbinowitsch E."/>
            <person name="Sharp S."/>
            <person name="Unwin L."/>
            <person name="Whitehead S."/>
            <person name="Quail M.A."/>
            <person name="Achtman M."/>
            <person name="Barrell B.G."/>
            <person name="Saunders N.J."/>
            <person name="Parkhill J."/>
        </authorList>
    </citation>
    <scope>NUCLEOTIDE SEQUENCE [LARGE SCALE GENOMIC DNA]</scope>
    <source>
        <strain>ATCC 700532 / DSM 15464 / FAM18</strain>
    </source>
</reference>
<accession>A1KUB3</accession>
<comment type="function">
    <text evidence="1">Catalyzes the pyruvoyl-dependent decarboxylation of aspartate to produce beta-alanine.</text>
</comment>
<comment type="catalytic activity">
    <reaction evidence="1">
        <text>L-aspartate + H(+) = beta-alanine + CO2</text>
        <dbReference type="Rhea" id="RHEA:19497"/>
        <dbReference type="ChEBI" id="CHEBI:15378"/>
        <dbReference type="ChEBI" id="CHEBI:16526"/>
        <dbReference type="ChEBI" id="CHEBI:29991"/>
        <dbReference type="ChEBI" id="CHEBI:57966"/>
        <dbReference type="EC" id="4.1.1.11"/>
    </reaction>
</comment>
<comment type="cofactor">
    <cofactor evidence="1">
        <name>pyruvate</name>
        <dbReference type="ChEBI" id="CHEBI:15361"/>
    </cofactor>
    <text evidence="1">Binds 1 pyruvoyl group covalently per subunit.</text>
</comment>
<comment type="pathway">
    <text evidence="1">Cofactor biosynthesis; (R)-pantothenate biosynthesis; beta-alanine from L-aspartate: step 1/1.</text>
</comment>
<comment type="subunit">
    <text evidence="1">Heterooctamer of four alpha and four beta subunits.</text>
</comment>
<comment type="subcellular location">
    <subcellularLocation>
        <location evidence="1">Cytoplasm</location>
    </subcellularLocation>
</comment>
<comment type="PTM">
    <text evidence="1">Is synthesized initially as an inactive proenzyme, which is activated by self-cleavage at a specific serine bond to produce a beta-subunit with a hydroxyl group at its C-terminus and an alpha-subunit with a pyruvoyl group at its N-terminus.</text>
</comment>
<comment type="similarity">
    <text evidence="1">Belongs to the PanD family.</text>
</comment>
<organism>
    <name type="scientific">Neisseria meningitidis serogroup C / serotype 2a (strain ATCC 700532 / DSM 15464 / FAM18)</name>
    <dbReference type="NCBI Taxonomy" id="272831"/>
    <lineage>
        <taxon>Bacteria</taxon>
        <taxon>Pseudomonadati</taxon>
        <taxon>Pseudomonadota</taxon>
        <taxon>Betaproteobacteria</taxon>
        <taxon>Neisseriales</taxon>
        <taxon>Neisseriaceae</taxon>
        <taxon>Neisseria</taxon>
    </lineage>
</organism>
<sequence>MFRTMLGGKIHRATVTEADLNYVGSITVDQDLLDAAGIYPNEKVAIVNNNNGERFETYTISGKRGSGVVCLNGAAARLVQKGDIVIIMSYVQLSEPEIAAHEPKVVLVDGNNKIRDIISYEPPHTVL</sequence>
<feature type="chain" id="PRO_0000307037" description="Aspartate 1-decarboxylase beta chain" evidence="1">
    <location>
        <begin position="1"/>
        <end position="24"/>
    </location>
</feature>
<feature type="chain" id="PRO_0000307038" description="Aspartate 1-decarboxylase alpha chain" evidence="1">
    <location>
        <begin position="25"/>
        <end position="127"/>
    </location>
</feature>
<feature type="active site" description="Schiff-base intermediate with substrate; via pyruvic acid" evidence="1">
    <location>
        <position position="25"/>
    </location>
</feature>
<feature type="active site" description="Proton donor" evidence="1">
    <location>
        <position position="58"/>
    </location>
</feature>
<feature type="binding site" evidence="1">
    <location>
        <position position="57"/>
    </location>
    <ligand>
        <name>substrate</name>
    </ligand>
</feature>
<feature type="binding site" evidence="1">
    <location>
        <begin position="73"/>
        <end position="75"/>
    </location>
    <ligand>
        <name>substrate</name>
    </ligand>
</feature>
<feature type="modified residue" description="Pyruvic acid (Ser)" evidence="1">
    <location>
        <position position="25"/>
    </location>
</feature>
<protein>
    <recommendedName>
        <fullName evidence="1">Aspartate 1-decarboxylase</fullName>
        <ecNumber evidence="1">4.1.1.11</ecNumber>
    </recommendedName>
    <alternativeName>
        <fullName evidence="1">Aspartate alpha-decarboxylase</fullName>
    </alternativeName>
    <component>
        <recommendedName>
            <fullName evidence="1">Aspartate 1-decarboxylase beta chain</fullName>
        </recommendedName>
    </component>
    <component>
        <recommendedName>
            <fullName evidence="1">Aspartate 1-decarboxylase alpha chain</fullName>
        </recommendedName>
    </component>
</protein>
<dbReference type="EC" id="4.1.1.11" evidence="1"/>
<dbReference type="EMBL" id="AM421808">
    <property type="protein sequence ID" value="CAM10455.1"/>
    <property type="molecule type" value="Genomic_DNA"/>
</dbReference>
<dbReference type="RefSeq" id="WP_002219192.1">
    <property type="nucleotide sequence ID" value="NC_008767.1"/>
</dbReference>
<dbReference type="SMR" id="A1KUB3"/>
<dbReference type="GeneID" id="86875765"/>
<dbReference type="KEGG" id="nmc:NMC1216"/>
<dbReference type="HOGENOM" id="CLU_115305_2_0_4"/>
<dbReference type="UniPathway" id="UPA00028">
    <property type="reaction ID" value="UER00002"/>
</dbReference>
<dbReference type="Proteomes" id="UP000002286">
    <property type="component" value="Chromosome"/>
</dbReference>
<dbReference type="GO" id="GO:0005829">
    <property type="term" value="C:cytosol"/>
    <property type="evidence" value="ECO:0007669"/>
    <property type="project" value="TreeGrafter"/>
</dbReference>
<dbReference type="GO" id="GO:0004068">
    <property type="term" value="F:aspartate 1-decarboxylase activity"/>
    <property type="evidence" value="ECO:0007669"/>
    <property type="project" value="UniProtKB-UniRule"/>
</dbReference>
<dbReference type="GO" id="GO:0006523">
    <property type="term" value="P:alanine biosynthetic process"/>
    <property type="evidence" value="ECO:0007669"/>
    <property type="project" value="InterPro"/>
</dbReference>
<dbReference type="GO" id="GO:0015940">
    <property type="term" value="P:pantothenate biosynthetic process"/>
    <property type="evidence" value="ECO:0007669"/>
    <property type="project" value="UniProtKB-UniRule"/>
</dbReference>
<dbReference type="CDD" id="cd06919">
    <property type="entry name" value="Asp_decarbox"/>
    <property type="match status" value="1"/>
</dbReference>
<dbReference type="Gene3D" id="2.40.40.20">
    <property type="match status" value="1"/>
</dbReference>
<dbReference type="HAMAP" id="MF_00446">
    <property type="entry name" value="PanD"/>
    <property type="match status" value="1"/>
</dbReference>
<dbReference type="InterPro" id="IPR009010">
    <property type="entry name" value="Asp_de-COase-like_dom_sf"/>
</dbReference>
<dbReference type="InterPro" id="IPR003190">
    <property type="entry name" value="Asp_decarbox"/>
</dbReference>
<dbReference type="NCBIfam" id="TIGR00223">
    <property type="entry name" value="panD"/>
    <property type="match status" value="1"/>
</dbReference>
<dbReference type="PANTHER" id="PTHR21012">
    <property type="entry name" value="ASPARTATE 1-DECARBOXYLASE"/>
    <property type="match status" value="1"/>
</dbReference>
<dbReference type="PANTHER" id="PTHR21012:SF0">
    <property type="entry name" value="ASPARTATE 1-DECARBOXYLASE"/>
    <property type="match status" value="1"/>
</dbReference>
<dbReference type="Pfam" id="PF02261">
    <property type="entry name" value="Asp_decarbox"/>
    <property type="match status" value="1"/>
</dbReference>
<dbReference type="PIRSF" id="PIRSF006246">
    <property type="entry name" value="Asp_decarbox"/>
    <property type="match status" value="1"/>
</dbReference>
<dbReference type="SUPFAM" id="SSF50692">
    <property type="entry name" value="ADC-like"/>
    <property type="match status" value="1"/>
</dbReference>